<protein>
    <recommendedName>
        <fullName>Uncharacterized transporter bll3475</fullName>
    </recommendedName>
</protein>
<reference key="1">
    <citation type="journal article" date="2002" name="DNA Res.">
        <title>Complete genomic sequence of nitrogen-fixing symbiotic bacterium Bradyrhizobium japonicum USDA110.</title>
        <authorList>
            <person name="Kaneko T."/>
            <person name="Nakamura Y."/>
            <person name="Sato S."/>
            <person name="Minamisawa K."/>
            <person name="Uchiumi T."/>
            <person name="Sasamoto S."/>
            <person name="Watanabe A."/>
            <person name="Idesawa K."/>
            <person name="Iriguchi M."/>
            <person name="Kawashima K."/>
            <person name="Kohara M."/>
            <person name="Matsumoto M."/>
            <person name="Shimpo S."/>
            <person name="Tsuruoka H."/>
            <person name="Wada T."/>
            <person name="Yamada M."/>
            <person name="Tabata S."/>
        </authorList>
    </citation>
    <scope>NUCLEOTIDE SEQUENCE [LARGE SCALE GENOMIC DNA]</scope>
    <source>
        <strain>JCM 10833 / BCRC 13528 / IAM 13628 / NBRC 14792 / USDA 110</strain>
    </source>
</reference>
<keyword id="KW-1003">Cell membrane</keyword>
<keyword id="KW-0472">Membrane</keyword>
<keyword id="KW-1185">Reference proteome</keyword>
<keyword id="KW-0677">Repeat</keyword>
<keyword id="KW-0812">Transmembrane</keyword>
<keyword id="KW-1133">Transmembrane helix</keyword>
<keyword id="KW-0813">Transport</keyword>
<proteinExistence type="inferred from homology"/>
<dbReference type="EMBL" id="BA000040">
    <property type="protein sequence ID" value="BAC48740.1"/>
    <property type="molecule type" value="Genomic_DNA"/>
</dbReference>
<dbReference type="RefSeq" id="NP_770115.1">
    <property type="nucleotide sequence ID" value="NC_004463.1"/>
</dbReference>
<dbReference type="RefSeq" id="WP_011086259.1">
    <property type="nucleotide sequence ID" value="NC_004463.1"/>
</dbReference>
<dbReference type="SMR" id="Q89PK5"/>
<dbReference type="FunCoup" id="Q89PK5">
    <property type="interactions" value="18"/>
</dbReference>
<dbReference type="STRING" id="224911.AAV28_14405"/>
<dbReference type="EnsemblBacteria" id="BAC48740">
    <property type="protein sequence ID" value="BAC48740"/>
    <property type="gene ID" value="BAC48740"/>
</dbReference>
<dbReference type="GeneID" id="46490506"/>
<dbReference type="KEGG" id="bja:bll3475"/>
<dbReference type="PATRIC" id="fig|224911.44.peg.3132"/>
<dbReference type="eggNOG" id="COG2985">
    <property type="taxonomic scope" value="Bacteria"/>
</dbReference>
<dbReference type="HOGENOM" id="CLU_035023_2_2_5"/>
<dbReference type="InParanoid" id="Q89PK5"/>
<dbReference type="OrthoDB" id="5166626at2"/>
<dbReference type="PhylomeDB" id="Q89PK5"/>
<dbReference type="Proteomes" id="UP000002526">
    <property type="component" value="Chromosome"/>
</dbReference>
<dbReference type="GO" id="GO:0005886">
    <property type="term" value="C:plasma membrane"/>
    <property type="evidence" value="ECO:0000318"/>
    <property type="project" value="GO_Central"/>
</dbReference>
<dbReference type="GO" id="GO:0008324">
    <property type="term" value="F:monoatomic cation transmembrane transporter activity"/>
    <property type="evidence" value="ECO:0007669"/>
    <property type="project" value="InterPro"/>
</dbReference>
<dbReference type="GO" id="GO:0006813">
    <property type="term" value="P:potassium ion transport"/>
    <property type="evidence" value="ECO:0007669"/>
    <property type="project" value="InterPro"/>
</dbReference>
<dbReference type="Gene3D" id="3.30.70.1450">
    <property type="entry name" value="Regulator of K+ conductance, C-terminal domain"/>
    <property type="match status" value="1"/>
</dbReference>
<dbReference type="InterPro" id="IPR050144">
    <property type="entry name" value="AAE_transporter"/>
</dbReference>
<dbReference type="InterPro" id="IPR006037">
    <property type="entry name" value="RCK_C"/>
</dbReference>
<dbReference type="InterPro" id="IPR036721">
    <property type="entry name" value="RCK_C_sf"/>
</dbReference>
<dbReference type="InterPro" id="IPR006512">
    <property type="entry name" value="YidE_YbjL"/>
</dbReference>
<dbReference type="PANTHER" id="PTHR30445:SF9">
    <property type="match status" value="1"/>
</dbReference>
<dbReference type="PANTHER" id="PTHR30445">
    <property type="entry name" value="K(+)_H(+) ANTIPORTER SUBUNIT KHTT"/>
    <property type="match status" value="1"/>
</dbReference>
<dbReference type="Pfam" id="PF06826">
    <property type="entry name" value="Asp-Al_Ex"/>
    <property type="match status" value="2"/>
</dbReference>
<dbReference type="Pfam" id="PF02080">
    <property type="entry name" value="TrkA_C"/>
    <property type="match status" value="1"/>
</dbReference>
<dbReference type="SUPFAM" id="SSF116726">
    <property type="entry name" value="TrkA C-terminal domain-like"/>
    <property type="match status" value="2"/>
</dbReference>
<dbReference type="PROSITE" id="PS51202">
    <property type="entry name" value="RCK_C"/>
    <property type="match status" value="2"/>
</dbReference>
<comment type="subcellular location">
    <subcellularLocation>
        <location evidence="3">Cell membrane</location>
        <topology evidence="3">Multi-pass membrane protein</topology>
    </subcellularLocation>
</comment>
<comment type="similarity">
    <text evidence="3">Belongs to the AAE transporter (TC 2.A.81) family.</text>
</comment>
<organism>
    <name type="scientific">Bradyrhizobium diazoefficiens (strain JCM 10833 / BCRC 13528 / IAM 13628 / NBRC 14792 / USDA 110)</name>
    <dbReference type="NCBI Taxonomy" id="224911"/>
    <lineage>
        <taxon>Bacteria</taxon>
        <taxon>Pseudomonadati</taxon>
        <taxon>Pseudomonadota</taxon>
        <taxon>Alphaproteobacteria</taxon>
        <taxon>Hyphomicrobiales</taxon>
        <taxon>Nitrobacteraceae</taxon>
        <taxon>Bradyrhizobium</taxon>
    </lineage>
</organism>
<name>Y3475_BRADU</name>
<evidence type="ECO:0000255" key="1"/>
<evidence type="ECO:0000255" key="2">
    <source>
        <dbReference type="PROSITE-ProRule" id="PRU00544"/>
    </source>
</evidence>
<evidence type="ECO:0000305" key="3"/>
<gene>
    <name type="ordered locus">bll3475</name>
</gene>
<sequence>MLTWLEQFLIRYPELALFLVIAAGYWIGSFKIGAFSLGPVTGALFAGLVVGDFAHVPVSSMTKSFLFLLFLFGVGYSVGPQFVQAMKRDGLKPVLLAVVVCLTGLAAAIAVGRILGLDPGFAAGLMSGSLSQSAAMGTATDAVNGLAVPEAQRALYISHIAVADAVCYIFGYAGVIMWCTVVAPALLKIDLRDEALKLERSLGMSRAKPGLASAWRKFELRAYRLDEHSPLIGSTVAAAEARPEHRLFIHRIRRGERVLQAEPGTILAPGDVITISAPRQIIVELIGSRAEEVEDRELLDIPLISADVFLINAKLAGMNLQEASQQDWTHGLYLRSLSRGGQELPIAPGVVLQRGDLLRIVGPEPVVENAAKNIGVIVAPSNSIDFVVLGLAIFFGGVVGVLVSFPVGSIKIALSTSVGTLLAGLLVGHLRTLDPRFGRIPDGAISLMTSLGLAAFVGLTGIHAGPIFLSALRDSGISLLLGGMVVTLLPQIVGFCFGHFVLRMNPILLLGGLTGA</sequence>
<accession>Q89PK5</accession>
<feature type="chain" id="PRO_0000208763" description="Uncharacterized transporter bll3475">
    <location>
        <begin position="1"/>
        <end position="516"/>
    </location>
</feature>
<feature type="transmembrane region" description="Helical" evidence="1">
    <location>
        <begin position="10"/>
        <end position="27"/>
    </location>
</feature>
<feature type="transmembrane region" description="Helical" evidence="1">
    <location>
        <begin position="32"/>
        <end position="54"/>
    </location>
</feature>
<feature type="transmembrane region" description="Helical" evidence="1">
    <location>
        <begin position="64"/>
        <end position="83"/>
    </location>
</feature>
<feature type="transmembrane region" description="Helical" evidence="1">
    <location>
        <begin position="95"/>
        <end position="117"/>
    </location>
</feature>
<feature type="transmembrane region" description="Helical" evidence="1">
    <location>
        <begin position="165"/>
        <end position="187"/>
    </location>
</feature>
<feature type="transmembrane region" description="Helical" evidence="1">
    <location>
        <begin position="386"/>
        <end position="408"/>
    </location>
</feature>
<feature type="transmembrane region" description="Helical" evidence="1">
    <location>
        <begin position="412"/>
        <end position="430"/>
    </location>
</feature>
<feature type="transmembrane region" description="Helical" evidence="1">
    <location>
        <begin position="443"/>
        <end position="465"/>
    </location>
</feature>
<feature type="transmembrane region" description="Helical" evidence="1">
    <location>
        <begin position="480"/>
        <end position="502"/>
    </location>
</feature>
<feature type="domain" description="RCK C-terminal 1" evidence="2">
    <location>
        <begin position="208"/>
        <end position="291"/>
    </location>
</feature>
<feature type="domain" description="RCK C-terminal 2" evidence="2">
    <location>
        <begin position="296"/>
        <end position="376"/>
    </location>
</feature>